<keyword id="KW-0007">Acetylation</keyword>
<keyword id="KW-0021">Allosteric enzyme</keyword>
<keyword id="KW-0119">Carbohydrate metabolism</keyword>
<keyword id="KW-0321">Glycogen metabolism</keyword>
<keyword id="KW-0328">Glycosyltransferase</keyword>
<keyword id="KW-0547">Nucleotide-binding</keyword>
<keyword id="KW-0597">Phosphoprotein</keyword>
<keyword id="KW-0663">Pyridoxal phosphate</keyword>
<keyword id="KW-1185">Reference proteome</keyword>
<keyword id="KW-0808">Transferase</keyword>
<dbReference type="EC" id="2.4.1.1" evidence="2"/>
<dbReference type="EMBL" id="L10669">
    <property type="protein sequence ID" value="AAA41253.1"/>
    <property type="molecule type" value="mRNA"/>
</dbReference>
<dbReference type="EMBL" id="X03032">
    <property type="protein sequence ID" value="CAA26835.1"/>
    <property type="molecule type" value="mRNA"/>
</dbReference>
<dbReference type="PIR" id="S34624">
    <property type="entry name" value="S34624"/>
</dbReference>
<dbReference type="SMR" id="P09812"/>
<dbReference type="FunCoup" id="P09812">
    <property type="interactions" value="852"/>
</dbReference>
<dbReference type="IntAct" id="P09812">
    <property type="interactions" value="2"/>
</dbReference>
<dbReference type="MINT" id="P09812"/>
<dbReference type="STRING" id="10116.ENSRNOP00000028636"/>
<dbReference type="BindingDB" id="P09812"/>
<dbReference type="ChEMBL" id="CHEMBL4105822"/>
<dbReference type="CAZy" id="GT35">
    <property type="family name" value="Glycosyltransferase Family 35"/>
</dbReference>
<dbReference type="GlyGen" id="P09812">
    <property type="glycosylation" value="1 site, 1 O-linked glycan (1 site)"/>
</dbReference>
<dbReference type="iPTMnet" id="P09812"/>
<dbReference type="PhosphoSitePlus" id="P09812"/>
<dbReference type="jPOST" id="P09812"/>
<dbReference type="PaxDb" id="10116-ENSRNOP00000028636"/>
<dbReference type="UCSC" id="RGD:3461">
    <property type="organism name" value="rat"/>
</dbReference>
<dbReference type="AGR" id="RGD:3461"/>
<dbReference type="RGD" id="3461">
    <property type="gene designation" value="Pygm"/>
</dbReference>
<dbReference type="eggNOG" id="KOG2099">
    <property type="taxonomic scope" value="Eukaryota"/>
</dbReference>
<dbReference type="InParanoid" id="P09812"/>
<dbReference type="PhylomeDB" id="P09812"/>
<dbReference type="BRENDA" id="2.4.1.1">
    <property type="organism ID" value="5301"/>
</dbReference>
<dbReference type="Reactome" id="R-RNO-70221">
    <property type="pathway name" value="Glycogen breakdown (glycogenolysis)"/>
</dbReference>
<dbReference type="PRO" id="PR:P09812"/>
<dbReference type="Proteomes" id="UP000002494">
    <property type="component" value="Unplaced"/>
</dbReference>
<dbReference type="GO" id="GO:0005737">
    <property type="term" value="C:cytoplasm"/>
    <property type="evidence" value="ECO:0000318"/>
    <property type="project" value="GO_Central"/>
</dbReference>
<dbReference type="GO" id="GO:0016529">
    <property type="term" value="C:sarcoplasmic reticulum"/>
    <property type="evidence" value="ECO:0000314"/>
    <property type="project" value="RGD"/>
</dbReference>
<dbReference type="GO" id="GO:0016208">
    <property type="term" value="F:AMP binding"/>
    <property type="evidence" value="ECO:0000314"/>
    <property type="project" value="RGD"/>
</dbReference>
<dbReference type="GO" id="GO:0030246">
    <property type="term" value="F:carbohydrate binding"/>
    <property type="evidence" value="ECO:0000314"/>
    <property type="project" value="RGD"/>
</dbReference>
<dbReference type="GO" id="GO:0008184">
    <property type="term" value="F:glycogen phosphorylase activity"/>
    <property type="evidence" value="ECO:0000314"/>
    <property type="project" value="RGD"/>
</dbReference>
<dbReference type="GO" id="GO:0030170">
    <property type="term" value="F:pyridoxal phosphate binding"/>
    <property type="evidence" value="ECO:0000314"/>
    <property type="project" value="RGD"/>
</dbReference>
<dbReference type="GO" id="GO:0005980">
    <property type="term" value="P:glycogen catabolic process"/>
    <property type="evidence" value="ECO:0000314"/>
    <property type="project" value="RGD"/>
</dbReference>
<dbReference type="GO" id="GO:0005977">
    <property type="term" value="P:glycogen metabolic process"/>
    <property type="evidence" value="ECO:0000314"/>
    <property type="project" value="RGD"/>
</dbReference>
<dbReference type="GO" id="GO:0006874">
    <property type="term" value="P:intracellular calcium ion homeostasis"/>
    <property type="evidence" value="ECO:0000314"/>
    <property type="project" value="RGD"/>
</dbReference>
<dbReference type="GO" id="GO:0051591">
    <property type="term" value="P:response to cAMP"/>
    <property type="evidence" value="ECO:0000314"/>
    <property type="project" value="RGD"/>
</dbReference>
<dbReference type="GO" id="GO:0001666">
    <property type="term" value="P:response to hypoxia"/>
    <property type="evidence" value="ECO:0000314"/>
    <property type="project" value="RGD"/>
</dbReference>
<dbReference type="CDD" id="cd04300">
    <property type="entry name" value="GT35_Glycogen_Phosphorylase"/>
    <property type="match status" value="1"/>
</dbReference>
<dbReference type="FunFam" id="3.40.50.2000:FF:000005">
    <property type="entry name" value="Alpha-1,4 glucan phosphorylase"/>
    <property type="match status" value="1"/>
</dbReference>
<dbReference type="FunFam" id="3.40.50.2000:FF:000197">
    <property type="entry name" value="Alpha-1,4 glucan phosphorylase"/>
    <property type="match status" value="1"/>
</dbReference>
<dbReference type="FunFam" id="3.40.50.2000:FF:000149">
    <property type="entry name" value="Glycogen phosphorylase, muscle form"/>
    <property type="match status" value="1"/>
</dbReference>
<dbReference type="Gene3D" id="3.40.50.2000">
    <property type="entry name" value="Glycogen Phosphorylase B"/>
    <property type="match status" value="2"/>
</dbReference>
<dbReference type="InterPro" id="IPR011833">
    <property type="entry name" value="Glycg_phsphrylas"/>
</dbReference>
<dbReference type="InterPro" id="IPR000811">
    <property type="entry name" value="Glyco_trans_35"/>
</dbReference>
<dbReference type="InterPro" id="IPR035090">
    <property type="entry name" value="Pyridoxal_P_attach_site"/>
</dbReference>
<dbReference type="NCBIfam" id="TIGR02093">
    <property type="entry name" value="P_ylase"/>
    <property type="match status" value="1"/>
</dbReference>
<dbReference type="PANTHER" id="PTHR11468">
    <property type="entry name" value="GLYCOGEN PHOSPHORYLASE"/>
    <property type="match status" value="1"/>
</dbReference>
<dbReference type="PANTHER" id="PTHR11468:SF32">
    <property type="entry name" value="GLYCOGEN PHOSPHORYLASE, MUSCLE FORM"/>
    <property type="match status" value="1"/>
</dbReference>
<dbReference type="Pfam" id="PF00343">
    <property type="entry name" value="Phosphorylase"/>
    <property type="match status" value="1"/>
</dbReference>
<dbReference type="PIRSF" id="PIRSF000460">
    <property type="entry name" value="Pprylas_GlgP"/>
    <property type="match status" value="1"/>
</dbReference>
<dbReference type="SUPFAM" id="SSF53756">
    <property type="entry name" value="UDP-Glycosyltransferase/glycogen phosphorylase"/>
    <property type="match status" value="1"/>
</dbReference>
<dbReference type="PROSITE" id="PS00102">
    <property type="entry name" value="PHOSPHORYLASE"/>
    <property type="match status" value="1"/>
</dbReference>
<name>PYGM_RAT</name>
<gene>
    <name evidence="6" type="primary">Pygm</name>
</gene>
<organism>
    <name type="scientific">Rattus norvegicus</name>
    <name type="common">Rat</name>
    <dbReference type="NCBI Taxonomy" id="10116"/>
    <lineage>
        <taxon>Eukaryota</taxon>
        <taxon>Metazoa</taxon>
        <taxon>Chordata</taxon>
        <taxon>Craniata</taxon>
        <taxon>Vertebrata</taxon>
        <taxon>Euteleostomi</taxon>
        <taxon>Mammalia</taxon>
        <taxon>Eutheria</taxon>
        <taxon>Euarchontoglires</taxon>
        <taxon>Glires</taxon>
        <taxon>Rodentia</taxon>
        <taxon>Myomorpha</taxon>
        <taxon>Muroidea</taxon>
        <taxon>Muridae</taxon>
        <taxon>Murinae</taxon>
        <taxon>Rattus</taxon>
    </lineage>
</organism>
<sequence length="842" mass="97273">MSRPLSDQDKRKQISVRGLAGVENVSDLKKNFNRHLHFTLVKDRNVATPRDYYFALAHTVRDHLVDRWIRTQQHYYAKDPKRIYYLSLELYMGRTLQNTMVNLALENACDEATYQLGLDMEELEEIEEDAGLGNGGLGRLAACFLDSMATLGLAAYGYGIRYEFGIFNQKICGGWQMEEADDWLRYGNPWEKARPEFTLPVHFYGRVEHTSQGAKWVDTQVVLAMPYDTPVPGYRNNVVNTMRLWSAKAPPYFNLKDFNVGGYIQAVLDRNLAENISRVLYPNDKFFEGKELRLKQEYFVVAATLQDIIRRFKSSKFGCRDPVRTNFDAFPDKVAIQLNDTHPSLAIPELIRILVDLERLDWDKAWDVTVKTCAYTNHTVLPEALERWPVHLMETLLPRHLQIIYEINQRFLNRVAAAFPGDVDRLRRMSLVEEGAVKRINMAHLCIAGSHAVNGVARIHSEILKKTIFKDFYELEPHKFQNKTNGITPRRWLVLCNPGLAEVIAERIGEEYISDLDQLRKLLSYLDDQAFIRDVAKVKQENKLKFSAYLETEYKVHINPNSLFDVQVKRIHEYKRQLLNCLHIITLYNRIKREPNRFMVPRTIMIGGKAAPGYHMAKMIIKLITAIGDVVNHDPAVGDRFRVIFLENYRVSLAEKVIPAADLSEQISTAGTEASGTGNMKFMLNGALTIGTMDGANVEMAEEAGEDNFFIFGMRVEDVERLDQRGYNAQEYYDRIPELRQIIEQLSSGFFSPKQPDLFKDIVNMVMHHDRFKVFADYEEYIKCQDKVSELYKNPREWTRMVIRNIATSGKFSSDRTIAQYAREIWGLEPSRQRLPAPDEKI</sequence>
<feature type="initiator methionine" description="Removed" evidence="1">
    <location>
        <position position="1"/>
    </location>
</feature>
<feature type="chain" id="PRO_0000188533" description="Glycogen phosphorylase, muscle form">
    <location>
        <begin position="2"/>
        <end position="842"/>
    </location>
</feature>
<feature type="binding site" evidence="2">
    <location>
        <position position="43"/>
    </location>
    <ligand>
        <name>AMP</name>
        <dbReference type="ChEBI" id="CHEBI:456215"/>
    </ligand>
</feature>
<feature type="binding site" evidence="1">
    <location>
        <position position="76"/>
    </location>
    <ligand>
        <name>AMP</name>
        <dbReference type="ChEBI" id="CHEBI:456215"/>
    </ligand>
</feature>
<feature type="binding site" evidence="2">
    <location>
        <begin position="310"/>
        <end position="319"/>
    </location>
    <ligand>
        <name>AMP</name>
        <dbReference type="ChEBI" id="CHEBI:456215"/>
    </ligand>
</feature>
<feature type="site" description="Involved in the association of subunits" evidence="1">
    <location>
        <position position="109"/>
    </location>
</feature>
<feature type="site" description="Involved in the association of subunits" evidence="1">
    <location>
        <position position="143"/>
    </location>
</feature>
<feature type="site" description="May be involved in allosteric control" evidence="1">
    <location>
        <position position="156"/>
    </location>
</feature>
<feature type="modified residue" description="N-acetylserine" evidence="1">
    <location>
        <position position="2"/>
    </location>
</feature>
<feature type="modified residue" description="Phosphoserine; by PHK; in form phosphorylase A" evidence="2">
    <location>
        <position position="15"/>
    </location>
</feature>
<feature type="modified residue" description="Phosphoserine" evidence="7">
    <location>
        <position position="26"/>
    </location>
</feature>
<feature type="modified residue" description="Phosphotyrosine" evidence="7">
    <location>
        <position position="204"/>
    </location>
</feature>
<feature type="modified residue" description="Phosphotyrosine" evidence="7">
    <location>
        <position position="227"/>
    </location>
</feature>
<feature type="modified residue" description="Phosphoserine" evidence="3">
    <location>
        <position position="430"/>
    </location>
</feature>
<feature type="modified residue" description="Phosphotyrosine" evidence="7">
    <location>
        <position position="473"/>
    </location>
</feature>
<feature type="modified residue" description="Phosphoserine" evidence="7">
    <location>
        <position position="514"/>
    </location>
</feature>
<feature type="modified residue" description="N6-(pyridoxal phosphate)lysine" evidence="1">
    <location>
        <position position="681"/>
    </location>
</feature>
<feature type="modified residue" description="Phosphoserine" evidence="7">
    <location>
        <position position="747"/>
    </location>
</feature>
<feature type="modified residue" description="Phosphoserine" evidence="7">
    <location>
        <position position="748"/>
    </location>
</feature>
<feature type="sequence conflict" description="In Ref. 2." evidence="4" ref="2">
    <original>RF</original>
    <variation>L</variation>
    <location>
        <begin position="640"/>
        <end position="641"/>
    </location>
</feature>
<feature type="sequence conflict" description="In Ref. 2." evidence="4" ref="2">
    <original>Q</original>
    <variation>N</variation>
    <location>
        <position position="724"/>
    </location>
</feature>
<feature type="sequence conflict" description="In Ref. 3; CAA26835." evidence="4" ref="3">
    <original>V</original>
    <variation>L</variation>
    <location>
        <position position="766"/>
    </location>
</feature>
<protein>
    <recommendedName>
        <fullName evidence="5">Glycogen phosphorylase, muscle form</fullName>
        <ecNumber evidence="2">2.4.1.1</ecNumber>
    </recommendedName>
    <alternativeName>
        <fullName>Myophosphorylase</fullName>
    </alternativeName>
</protein>
<reference key="1">
    <citation type="journal article" date="1993" name="Biochim. Biophys. Acta">
        <title>Comparative analysis of species-independent, isozyme-specific amino-acid substitutions in mammalian muscle, brain and liver glycogen phosphorylases.</title>
        <authorList>
            <person name="Hudson J.W."/>
            <person name="Hefferon K.L."/>
            <person name="Crerar M.M."/>
        </authorList>
    </citation>
    <scope>NUCLEOTIDE SEQUENCE [MRNA]</scope>
</reference>
<reference key="2">
    <citation type="journal article" date="1986" name="FEBS Lett.">
        <title>Isolation of partial cDNAs for rat liver and muscle glycogen phosphorylase isozymes.</title>
        <authorList>
            <person name="Osawa S."/>
            <person name="Chiu R.H."/>
            <person name="McDonough A."/>
            <person name="Miller T.B. Jr."/>
            <person name="Johnson G.L."/>
        </authorList>
    </citation>
    <scope>NUCLEOTIDE SEQUENCE [MRNA] OF 566-762</scope>
</reference>
<reference key="3">
    <citation type="journal article" date="1985" name="Eur. J. Biochem.">
        <title>Comparative sequence analysis of rat, rabbit, and human muscle glycogen phosphorylase cDNAs.</title>
        <authorList>
            <person name="Hwang P.K."/>
            <person name="See Y.P."/>
            <person name="Vincentini A.M."/>
            <person name="Powers M.A."/>
            <person name="Fletterick R.J."/>
            <person name="Crerar M.M."/>
        </authorList>
    </citation>
    <scope>NUCLEOTIDE SEQUENCE [MRNA] OF 763-842</scope>
</reference>
<reference key="4">
    <citation type="journal article" date="2012" name="Nat. Commun.">
        <title>Quantitative maps of protein phosphorylation sites across 14 different rat organs and tissues.</title>
        <authorList>
            <person name="Lundby A."/>
            <person name="Secher A."/>
            <person name="Lage K."/>
            <person name="Nordsborg N.B."/>
            <person name="Dmytriyev A."/>
            <person name="Lundby C."/>
            <person name="Olsen J.V."/>
        </authorList>
    </citation>
    <scope>PHOSPHORYLATION [LARGE SCALE ANALYSIS] AT SER-26; TYR-204; TYR-227; TYR-473; SER-514; SER-747 AND SER-748</scope>
    <scope>IDENTIFICATION BY MASS SPECTROMETRY [LARGE SCALE ANALYSIS]</scope>
</reference>
<proteinExistence type="evidence at protein level"/>
<evidence type="ECO:0000250" key="1">
    <source>
        <dbReference type="UniProtKB" id="P00489"/>
    </source>
</evidence>
<evidence type="ECO:0000250" key="2">
    <source>
        <dbReference type="UniProtKB" id="P11217"/>
    </source>
</evidence>
<evidence type="ECO:0000250" key="3">
    <source>
        <dbReference type="UniProtKB" id="Q9WUB3"/>
    </source>
</evidence>
<evidence type="ECO:0000305" key="4"/>
<evidence type="ECO:0000305" key="5">
    <source>
    </source>
</evidence>
<evidence type="ECO:0000312" key="6">
    <source>
        <dbReference type="RGD" id="3461"/>
    </source>
</evidence>
<evidence type="ECO:0007744" key="7">
    <source>
    </source>
</evidence>
<accession>P09812</accession>
<comment type="function">
    <text evidence="2">Allosteric enzyme that catalyzes the rate-limiting step in glycogen catabolism, the phosphorolytic cleavage of glycogen to produce glucose-1-phosphate, and plays a central role in maintaining cellular and organismal glucose homeostasis.</text>
</comment>
<comment type="catalytic activity">
    <reaction evidence="2">
        <text>[(1-&gt;4)-alpha-D-glucosyl](n) + phosphate = [(1-&gt;4)-alpha-D-glucosyl](n-1) + alpha-D-glucose 1-phosphate</text>
        <dbReference type="Rhea" id="RHEA:41732"/>
        <dbReference type="Rhea" id="RHEA-COMP:9584"/>
        <dbReference type="Rhea" id="RHEA-COMP:9586"/>
        <dbReference type="ChEBI" id="CHEBI:15444"/>
        <dbReference type="ChEBI" id="CHEBI:43474"/>
        <dbReference type="ChEBI" id="CHEBI:58601"/>
        <dbReference type="EC" id="2.4.1.1"/>
    </reaction>
    <physiologicalReaction direction="left-to-right" evidence="2">
        <dbReference type="Rhea" id="RHEA:41733"/>
    </physiologicalReaction>
</comment>
<comment type="cofactor">
    <cofactor evidence="1">
        <name>pyridoxal 5'-phosphate</name>
        <dbReference type="ChEBI" id="CHEBI:597326"/>
    </cofactor>
</comment>
<comment type="activity regulation">
    <text evidence="2">Allosterically regulated through the non-covalent binding of metabolites, being activated by AMP and inhibited by ATP, ADP, and glucose-6-phosphate. The activity is also controlled by post-translational modifications including phosphorylation.</text>
</comment>
<comment type="subunit">
    <text evidence="2">Homodimer. Homotetramer; to form the enzymatically active phosphorylase A.</text>
</comment>
<comment type="PTM">
    <text evidence="2">Phosphorylation of Ser-15 converts phosphorylase B (unphosphorylated) to phosphorylase A.</text>
</comment>
<comment type="similarity">
    <text evidence="4">Belongs to the glycogen phosphorylase family.</text>
</comment>